<feature type="chain" id="PRO_0000063095" description="Putative pterin-4-alpha-carbinolamine dehydratase">
    <location>
        <begin position="1"/>
        <end position="112"/>
    </location>
</feature>
<protein>
    <recommendedName>
        <fullName evidence="1">Putative pterin-4-alpha-carbinolamine dehydratase</fullName>
        <shortName evidence="1">PHS</shortName>
        <ecNumber evidence="1">4.2.1.96</ecNumber>
    </recommendedName>
    <alternativeName>
        <fullName evidence="1">4-alpha-hydroxy-tetrahydropterin dehydratase</fullName>
    </alternativeName>
    <alternativeName>
        <fullName evidence="1">Pterin carbinolamine dehydratase</fullName>
        <shortName evidence="1">PCD</shortName>
    </alternativeName>
</protein>
<evidence type="ECO:0000255" key="1">
    <source>
        <dbReference type="HAMAP-Rule" id="MF_00434"/>
    </source>
</evidence>
<proteinExistence type="inferred from homology"/>
<dbReference type="EC" id="4.2.1.96" evidence="1"/>
<dbReference type="EMBL" id="AE014299">
    <property type="protein sequence ID" value="AAN54722.1"/>
    <property type="molecule type" value="Genomic_DNA"/>
</dbReference>
<dbReference type="RefSeq" id="NP_717278.1">
    <property type="nucleotide sequence ID" value="NC_004347.2"/>
</dbReference>
<dbReference type="RefSeq" id="WP_011071818.1">
    <property type="nucleotide sequence ID" value="NC_004347.2"/>
</dbReference>
<dbReference type="SMR" id="Q8EGD7"/>
<dbReference type="STRING" id="211586.SO_1667"/>
<dbReference type="PaxDb" id="211586-SO_1667"/>
<dbReference type="KEGG" id="son:SO_1667"/>
<dbReference type="PATRIC" id="fig|211586.12.peg.1607"/>
<dbReference type="eggNOG" id="COG2154">
    <property type="taxonomic scope" value="Bacteria"/>
</dbReference>
<dbReference type="HOGENOM" id="CLU_081974_2_2_6"/>
<dbReference type="OrthoDB" id="5294615at2"/>
<dbReference type="PhylomeDB" id="Q8EGD7"/>
<dbReference type="BioCyc" id="SONE211586:G1GMP-1534-MONOMER"/>
<dbReference type="Proteomes" id="UP000008186">
    <property type="component" value="Chromosome"/>
</dbReference>
<dbReference type="GO" id="GO:0008124">
    <property type="term" value="F:4-alpha-hydroxytetrahydrobiopterin dehydratase activity"/>
    <property type="evidence" value="ECO:0007669"/>
    <property type="project" value="UniProtKB-UniRule"/>
</dbReference>
<dbReference type="GO" id="GO:0006729">
    <property type="term" value="P:tetrahydrobiopterin biosynthetic process"/>
    <property type="evidence" value="ECO:0007669"/>
    <property type="project" value="InterPro"/>
</dbReference>
<dbReference type="CDD" id="cd00913">
    <property type="entry name" value="PCD_DCoH_subfamily_a"/>
    <property type="match status" value="1"/>
</dbReference>
<dbReference type="Gene3D" id="3.30.1360.20">
    <property type="entry name" value="Transcriptional coactivator/pterin dehydratase"/>
    <property type="match status" value="1"/>
</dbReference>
<dbReference type="HAMAP" id="MF_00434">
    <property type="entry name" value="Pterin_4_alpha"/>
    <property type="match status" value="1"/>
</dbReference>
<dbReference type="InterPro" id="IPR036428">
    <property type="entry name" value="PCD_sf"/>
</dbReference>
<dbReference type="InterPro" id="IPR050376">
    <property type="entry name" value="Pterin-4-alpha-carb_dehyd"/>
</dbReference>
<dbReference type="InterPro" id="IPR001533">
    <property type="entry name" value="Pterin_deHydtase"/>
</dbReference>
<dbReference type="NCBIfam" id="NF002016">
    <property type="entry name" value="PRK00823.1-1"/>
    <property type="match status" value="1"/>
</dbReference>
<dbReference type="PANTHER" id="PTHR42805">
    <property type="entry name" value="PTERIN-4-ALPHA-CARBINOLAMINE DEHYDRATASE-RELATED"/>
    <property type="match status" value="1"/>
</dbReference>
<dbReference type="PANTHER" id="PTHR42805:SF1">
    <property type="entry name" value="PTERIN-4-ALPHA-CARBINOLAMINE DEHYDRATASE-RELATED"/>
    <property type="match status" value="1"/>
</dbReference>
<dbReference type="Pfam" id="PF01329">
    <property type="entry name" value="Pterin_4a"/>
    <property type="match status" value="1"/>
</dbReference>
<dbReference type="SUPFAM" id="SSF55248">
    <property type="entry name" value="PCD-like"/>
    <property type="match status" value="1"/>
</dbReference>
<accession>Q8EGD7</accession>
<comment type="catalytic activity">
    <reaction evidence="1">
        <text>(4aS,6R)-4a-hydroxy-L-erythro-5,6,7,8-tetrahydrobiopterin = (6R)-L-erythro-6,7-dihydrobiopterin + H2O</text>
        <dbReference type="Rhea" id="RHEA:11920"/>
        <dbReference type="ChEBI" id="CHEBI:15377"/>
        <dbReference type="ChEBI" id="CHEBI:15642"/>
        <dbReference type="ChEBI" id="CHEBI:43120"/>
        <dbReference type="EC" id="4.2.1.96"/>
    </reaction>
</comment>
<comment type="similarity">
    <text evidence="1">Belongs to the pterin-4-alpha-carbinolamine dehydratase family.</text>
</comment>
<reference key="1">
    <citation type="journal article" date="2002" name="Nat. Biotechnol.">
        <title>Genome sequence of the dissimilatory metal ion-reducing bacterium Shewanella oneidensis.</title>
        <authorList>
            <person name="Heidelberg J.F."/>
            <person name="Paulsen I.T."/>
            <person name="Nelson K.E."/>
            <person name="Gaidos E.J."/>
            <person name="Nelson W.C."/>
            <person name="Read T.D."/>
            <person name="Eisen J.A."/>
            <person name="Seshadri R."/>
            <person name="Ward N.L."/>
            <person name="Methe B.A."/>
            <person name="Clayton R.A."/>
            <person name="Meyer T."/>
            <person name="Tsapin A."/>
            <person name="Scott J."/>
            <person name="Beanan M.J."/>
            <person name="Brinkac L.M."/>
            <person name="Daugherty S.C."/>
            <person name="DeBoy R.T."/>
            <person name="Dodson R.J."/>
            <person name="Durkin A.S."/>
            <person name="Haft D.H."/>
            <person name="Kolonay J.F."/>
            <person name="Madupu R."/>
            <person name="Peterson J.D."/>
            <person name="Umayam L.A."/>
            <person name="White O."/>
            <person name="Wolf A.M."/>
            <person name="Vamathevan J.J."/>
            <person name="Weidman J.F."/>
            <person name="Impraim M."/>
            <person name="Lee K."/>
            <person name="Berry K.J."/>
            <person name="Lee C."/>
            <person name="Mueller J."/>
            <person name="Khouri H.M."/>
            <person name="Gill J."/>
            <person name="Utterback T.R."/>
            <person name="McDonald L.A."/>
            <person name="Feldblyum T.V."/>
            <person name="Smith H.O."/>
            <person name="Venter J.C."/>
            <person name="Nealson K.H."/>
            <person name="Fraser C.M."/>
        </authorList>
    </citation>
    <scope>NUCLEOTIDE SEQUENCE [LARGE SCALE GENOMIC DNA]</scope>
    <source>
        <strain>ATCC 700550 / JCM 31522 / CIP 106686 / LMG 19005 / NCIMB 14063 / MR-1</strain>
    </source>
</reference>
<sequence>MTALTQMKCEACQADAPKVTDEELAELIRMIPDWGVQVRDGIMQLERVYKFKNFKLAMAFTNKLAELAEEEFHHPGILTEWGKVTVTWWSHSIKGLHKNDFIMAAKTDLLLD</sequence>
<gene>
    <name type="ordered locus">SO_1667</name>
</gene>
<keyword id="KW-0456">Lyase</keyword>
<keyword id="KW-1185">Reference proteome</keyword>
<name>PHS_SHEON</name>
<organism>
    <name type="scientific">Shewanella oneidensis (strain ATCC 700550 / JCM 31522 / CIP 106686 / LMG 19005 / NCIMB 14063 / MR-1)</name>
    <dbReference type="NCBI Taxonomy" id="211586"/>
    <lineage>
        <taxon>Bacteria</taxon>
        <taxon>Pseudomonadati</taxon>
        <taxon>Pseudomonadota</taxon>
        <taxon>Gammaproteobacteria</taxon>
        <taxon>Alteromonadales</taxon>
        <taxon>Shewanellaceae</taxon>
        <taxon>Shewanella</taxon>
    </lineage>
</organism>